<gene>
    <name evidence="1" type="primary">NP</name>
</gene>
<comment type="function">
    <text evidence="1">Encapsidates the negative strand viral RNA, protecting it from nucleases. The encapsidated genomic RNA is termed the ribonucleoprotein (RNP) and serves as template for transcription and replication. The RNP needs to be localized in the host nucleus to start an infectious cycle, but is too large to diffuse through the nuclear pore complex. NP comprises at least 2 nuclear localization signals that are responsible for the active RNP import into the nucleus through cellular importin alpha/beta pathway. Later in the infection, nclear export of RNPs are mediated through viral proteins NEP interacting with M1 which binds nucleoproteins. It is possible that nucleoprotein binds directly host exportin-1/XPO1 and plays an active role in RNPs nuclear export. M1 interaction with RNP seems to hide nucleoprotein's nuclear localization signals. Soon after a virion infects a new cell, M1 dissociates from the RNP under acidification of the virion driven by M2 protein. Dissociation of M1 from RNP unmasks nucleoprotein's nuclear localization signals, targeting the RNP to the nucleus.</text>
</comment>
<comment type="subunit">
    <text evidence="1">Homomultimerizes to form the nucleocapsid. May bind host exportin-1/XPO1. Binds to viral genomic RNA. Protein-RNA contacts are mediated by a combination of electrostatic interactions between positively charged residues and the phosphate backbone and planar interactions between aromatic side chains and bases.</text>
</comment>
<comment type="subcellular location">
    <subcellularLocation>
        <location evidence="1">Virion</location>
    </subcellularLocation>
    <subcellularLocation>
        <location evidence="1">Host nucleus</location>
    </subcellularLocation>
</comment>
<comment type="PTM">
    <text evidence="1">Late in virus-infected cells, may be cleaved from a 56-kDa protein to a 53-kDa protein by a cellular caspase. This cleavage might be a marker for the onset of apoptosis in infected cells or have a specific function in virus host interaction.</text>
</comment>
<comment type="similarity">
    <text evidence="1">Belongs to the influenza viruses nucleoprotein family.</text>
</comment>
<organismHost>
    <name type="scientific">Aves</name>
    <dbReference type="NCBI Taxonomy" id="8782"/>
</organismHost>
<organismHost>
    <name type="scientific">Homo sapiens</name>
    <name type="common">Human</name>
    <dbReference type="NCBI Taxonomy" id="9606"/>
</organismHost>
<organismHost>
    <name type="scientific">Sus scrofa</name>
    <name type="common">Pig</name>
    <dbReference type="NCBI Taxonomy" id="9823"/>
</organismHost>
<dbReference type="EMBL" id="M63749">
    <property type="protein sequence ID" value="AAA52248.1"/>
    <property type="molecule type" value="Genomic_RNA"/>
</dbReference>
<dbReference type="EMBL" id="CY013274">
    <property type="protein sequence ID" value="ABI20830.1"/>
    <property type="molecule type" value="Other_RNA"/>
</dbReference>
<dbReference type="SMR" id="P26069"/>
<dbReference type="PRO" id="PR:P26069"/>
<dbReference type="Proteomes" id="UP000156248">
    <property type="component" value="Genome"/>
</dbReference>
<dbReference type="GO" id="GO:0019029">
    <property type="term" value="C:helical viral capsid"/>
    <property type="evidence" value="ECO:0007669"/>
    <property type="project" value="UniProtKB-UniRule"/>
</dbReference>
<dbReference type="GO" id="GO:0043657">
    <property type="term" value="C:host cell"/>
    <property type="evidence" value="ECO:0007669"/>
    <property type="project" value="GOC"/>
</dbReference>
<dbReference type="GO" id="GO:0042025">
    <property type="term" value="C:host cell nucleus"/>
    <property type="evidence" value="ECO:0007669"/>
    <property type="project" value="UniProtKB-SubCell"/>
</dbReference>
<dbReference type="GO" id="GO:1990904">
    <property type="term" value="C:ribonucleoprotein complex"/>
    <property type="evidence" value="ECO:0007669"/>
    <property type="project" value="UniProtKB-KW"/>
</dbReference>
<dbReference type="GO" id="GO:0019013">
    <property type="term" value="C:viral nucleocapsid"/>
    <property type="evidence" value="ECO:0007669"/>
    <property type="project" value="UniProtKB-UniRule"/>
</dbReference>
<dbReference type="GO" id="GO:0003723">
    <property type="term" value="F:RNA binding"/>
    <property type="evidence" value="ECO:0007669"/>
    <property type="project" value="UniProtKB-UniRule"/>
</dbReference>
<dbReference type="GO" id="GO:0005198">
    <property type="term" value="F:structural molecule activity"/>
    <property type="evidence" value="ECO:0007669"/>
    <property type="project" value="UniProtKB-UniRule"/>
</dbReference>
<dbReference type="GO" id="GO:0046718">
    <property type="term" value="P:symbiont entry into host cell"/>
    <property type="evidence" value="ECO:0007669"/>
    <property type="project" value="UniProtKB-KW"/>
</dbReference>
<dbReference type="GO" id="GO:0075732">
    <property type="term" value="P:viral penetration into host nucleus"/>
    <property type="evidence" value="ECO:0007669"/>
    <property type="project" value="UniProtKB-UniRule"/>
</dbReference>
<dbReference type="HAMAP" id="MF_04070">
    <property type="entry name" value="INFV_NCAP"/>
    <property type="match status" value="1"/>
</dbReference>
<dbReference type="InterPro" id="IPR002141">
    <property type="entry name" value="Flu_NP"/>
</dbReference>
<dbReference type="Pfam" id="PF00506">
    <property type="entry name" value="Flu_NP"/>
    <property type="match status" value="1"/>
</dbReference>
<dbReference type="SUPFAM" id="SSF161003">
    <property type="entry name" value="flu NP-like"/>
    <property type="match status" value="1"/>
</dbReference>
<evidence type="ECO:0000255" key="1">
    <source>
        <dbReference type="HAMAP-Rule" id="MF_04070"/>
    </source>
</evidence>
<evidence type="ECO:0000256" key="2">
    <source>
        <dbReference type="SAM" id="MobiDB-lite"/>
    </source>
</evidence>
<feature type="chain" id="PRO_0000079059" description="Nucleoprotein">
    <location>
        <begin position="1"/>
        <end position="498"/>
    </location>
</feature>
<feature type="region of interest" description="Disordered" evidence="2">
    <location>
        <begin position="1"/>
        <end position="21"/>
    </location>
</feature>
<feature type="short sequence motif" description="Unconventional nuclear localization signal" evidence="1">
    <location>
        <begin position="1"/>
        <end position="18"/>
    </location>
</feature>
<feature type="short sequence motif" description="Bipartite nuclear localization signal" evidence="1">
    <location>
        <begin position="198"/>
        <end position="216"/>
    </location>
</feature>
<feature type="compositionally biased region" description="Basic and acidic residues" evidence="2">
    <location>
        <begin position="8"/>
        <end position="21"/>
    </location>
</feature>
<name>NCAP_I40A0</name>
<keyword id="KW-0167">Capsid protein</keyword>
<keyword id="KW-1139">Helical capsid protein</keyword>
<keyword id="KW-1048">Host nucleus</keyword>
<keyword id="KW-0945">Host-virus interaction</keyword>
<keyword id="KW-0687">Ribonucleoprotein</keyword>
<keyword id="KW-0694">RNA-binding</keyword>
<keyword id="KW-0543">Viral nucleoprotein</keyword>
<keyword id="KW-1163">Viral penetration into host nucleus</keyword>
<keyword id="KW-0946">Virion</keyword>
<keyword id="KW-1160">Virus entry into host cell</keyword>
<sequence length="498" mass="56151">MASQGTKRSYEQMETDGERQNATEIRASVGKMISGIGRFYIQMCTELKLSDYEGRLIQNSLTIERMVLSAFDERRNKYLEEHPSAGKDPKKTGGPIYKRVGGKWMRELILYDKEEIRRIWRQANNGDDATAGLTHMMIWHSNLNDTTYQRTRALVRTGMDPRMCSLMQGSTLPRRSGAAGAAVKGVGTMVMELIRMIKRGINDRNFWRGENGRKTRIAYERMCNILKGKFQTAAQRAMMDQVRESRNPGNAEIEDLIFLARSALILRGSVAHKSCLPACVYGPAVASGYDFEREGYSLVGIDPFKLLQNSQVYSLIRPNENPAHKSQLVWMACNSAAFEDLRVSSFIRGTKVVPRGRLSTRGVQIASNENMDTMESSTLELRSRYWAIRTRSGGNTNQQRASAGQISIQPTFSVQRNLPFDKTTIMAAFTGNAEGRTSDMRAEIIRMMENARPEEVSFQGRGVFELSDERAANPIVPSFDMSNEGSYFFGDNAEEYDN</sequence>
<organism>
    <name type="scientific">Influenza A virus (strain A/Hickox/1940 H1N1)</name>
    <dbReference type="NCBI Taxonomy" id="383543"/>
    <lineage>
        <taxon>Viruses</taxon>
        <taxon>Riboviria</taxon>
        <taxon>Orthornavirae</taxon>
        <taxon>Negarnaviricota</taxon>
        <taxon>Polyploviricotina</taxon>
        <taxon>Insthoviricetes</taxon>
        <taxon>Articulavirales</taxon>
        <taxon>Orthomyxoviridae</taxon>
        <taxon>Alphainfluenzavirus</taxon>
        <taxon>Alphainfluenzavirus influenzae</taxon>
        <taxon>Influenza A virus</taxon>
    </lineage>
</organism>
<proteinExistence type="inferred from homology"/>
<reference key="1">
    <citation type="journal article" date="1991" name="J. Virol.">
        <title>Evolution of influenza A virus nucleoprotein genes: implications for the origins of H1N1 human and classical swine viruses.</title>
        <authorList>
            <person name="Gorman O.T."/>
            <person name="Bean W.J."/>
            <person name="Kawaoka Y."/>
            <person name="Donatelli I."/>
            <person name="Guo Y."/>
            <person name="Webster R.G."/>
        </authorList>
    </citation>
    <scope>NUCLEOTIDE SEQUENCE [GENOMIC RNA]</scope>
</reference>
<reference key="2">
    <citation type="submission" date="2006-08" db="EMBL/GenBank/DDBJ databases">
        <title>The NIAID influenza genome sequencing project.</title>
        <authorList>
            <person name="Spiro D."/>
            <person name="Ghedin E."/>
            <person name="Sengamalay N."/>
            <person name="Halpin R."/>
            <person name="Boyne A."/>
            <person name="Zaborsky J."/>
            <person name="Feldblyum T."/>
            <person name="Subbu V."/>
            <person name="Sparenborg J."/>
            <person name="Shumway M."/>
            <person name="Sitz J."/>
            <person name="Katzel D."/>
            <person name="Koo H."/>
            <person name="Salzberg S.L."/>
            <person name="Griesemer S."/>
            <person name="St George K."/>
            <person name="Bennett R."/>
            <person name="Taylor J."/>
            <person name="Bennink J.R."/>
            <person name="Yewdell J.W."/>
            <person name="Bao Y."/>
            <person name="Bolotov P."/>
            <person name="Dernovoy D."/>
            <person name="Kiryutin B."/>
            <person name="Lipman D.J."/>
            <person name="Tatusova T."/>
        </authorList>
    </citation>
    <scope>NUCLEOTIDE SEQUENCE [GENOMIC RNA]</scope>
</reference>
<reference key="3">
    <citation type="submission" date="2006-09" db="EMBL/GenBank/DDBJ databases">
        <authorList>
            <consortium name="The NIAID Influenza Genome Sequencing Consortium"/>
        </authorList>
    </citation>
    <scope>NUCLEOTIDE SEQUENCE [GENOMIC RNA]</scope>
</reference>
<protein>
    <recommendedName>
        <fullName evidence="1">Nucleoprotein</fullName>
    </recommendedName>
    <alternativeName>
        <fullName evidence="1">Nucleocapsid protein</fullName>
        <shortName evidence="1">Protein N</shortName>
    </alternativeName>
</protein>
<accession>P26069</accession>
<accession>Q0HD56</accession>